<dbReference type="EMBL" id="L42023">
    <property type="protein sequence ID" value="AAC21770.1"/>
    <property type="molecule type" value="Genomic_DNA"/>
</dbReference>
<dbReference type="PIR" id="D64142">
    <property type="entry name" value="D64142"/>
</dbReference>
<dbReference type="RefSeq" id="NP_438265.1">
    <property type="nucleotide sequence ID" value="NC_000907.1"/>
</dbReference>
<dbReference type="SMR" id="Q57493"/>
<dbReference type="STRING" id="71421.HI_0092"/>
<dbReference type="TCDB" id="2.A.8.1.9">
    <property type="family name" value="the gluconate:h(+) symporter (gntp) family"/>
</dbReference>
<dbReference type="DNASU" id="950987"/>
<dbReference type="EnsemblBacteria" id="AAC21770">
    <property type="protein sequence ID" value="AAC21770"/>
    <property type="gene ID" value="HI_0092"/>
</dbReference>
<dbReference type="KEGG" id="hin:HI_0092"/>
<dbReference type="PATRIC" id="fig|71421.8.peg.93"/>
<dbReference type="eggNOG" id="COG2610">
    <property type="taxonomic scope" value="Bacteria"/>
</dbReference>
<dbReference type="HOGENOM" id="CLU_052160_0_0_6"/>
<dbReference type="OrthoDB" id="2136698at2"/>
<dbReference type="PhylomeDB" id="Q57493"/>
<dbReference type="BioCyc" id="HINF71421:G1GJ1-97-MONOMER"/>
<dbReference type="Proteomes" id="UP000000579">
    <property type="component" value="Chromosome"/>
</dbReference>
<dbReference type="GO" id="GO:0005886">
    <property type="term" value="C:plasma membrane"/>
    <property type="evidence" value="ECO:0000318"/>
    <property type="project" value="GO_Central"/>
</dbReference>
<dbReference type="GO" id="GO:0015128">
    <property type="term" value="F:gluconate transmembrane transporter activity"/>
    <property type="evidence" value="ECO:0007669"/>
    <property type="project" value="InterPro"/>
</dbReference>
<dbReference type="InterPro" id="IPR003474">
    <property type="entry name" value="Glcn_transporter"/>
</dbReference>
<dbReference type="PANTHER" id="PTHR30354">
    <property type="entry name" value="GNT FAMILY GLUCONATE TRANSPORTER"/>
    <property type="match status" value="1"/>
</dbReference>
<dbReference type="PANTHER" id="PTHR30354:SF23">
    <property type="entry name" value="GNTP FAMILY PERMEASE"/>
    <property type="match status" value="1"/>
</dbReference>
<dbReference type="Pfam" id="PF02447">
    <property type="entry name" value="GntP_permease"/>
    <property type="match status" value="1"/>
</dbReference>
<comment type="subcellular location">
    <subcellularLocation>
        <location evidence="2">Cell membrane</location>
        <topology evidence="2">Multi-pass membrane protein</topology>
    </subcellularLocation>
</comment>
<comment type="similarity">
    <text evidence="2">Belongs to the CitM (TC 2.A.11) transporter family.</text>
</comment>
<reference key="1">
    <citation type="journal article" date="1995" name="Science">
        <title>Whole-genome random sequencing and assembly of Haemophilus influenzae Rd.</title>
        <authorList>
            <person name="Fleischmann R.D."/>
            <person name="Adams M.D."/>
            <person name="White O."/>
            <person name="Clayton R.A."/>
            <person name="Kirkness E.F."/>
            <person name="Kerlavage A.R."/>
            <person name="Bult C.J."/>
            <person name="Tomb J.-F."/>
            <person name="Dougherty B.A."/>
            <person name="Merrick J.M."/>
            <person name="McKenney K."/>
            <person name="Sutton G.G."/>
            <person name="FitzHugh W."/>
            <person name="Fields C.A."/>
            <person name="Gocayne J.D."/>
            <person name="Scott J.D."/>
            <person name="Shirley R."/>
            <person name="Liu L.-I."/>
            <person name="Glodek A."/>
            <person name="Kelley J.M."/>
            <person name="Weidman J.F."/>
            <person name="Phillips C.A."/>
            <person name="Spriggs T."/>
            <person name="Hedblom E."/>
            <person name="Cotton M.D."/>
            <person name="Utterback T.R."/>
            <person name="Hanna M.C."/>
            <person name="Nguyen D.T."/>
            <person name="Saudek D.M."/>
            <person name="Brandon R.C."/>
            <person name="Fine L.D."/>
            <person name="Fritchman J.L."/>
            <person name="Fuhrmann J.L."/>
            <person name="Geoghagen N.S.M."/>
            <person name="Gnehm C.L."/>
            <person name="McDonald L.A."/>
            <person name="Small K.V."/>
            <person name="Fraser C.M."/>
            <person name="Smith H.O."/>
            <person name="Venter J.C."/>
        </authorList>
    </citation>
    <scope>NUCLEOTIDE SEQUENCE [LARGE SCALE GENOMIC DNA]</scope>
    <source>
        <strain>ATCC 51907 / DSM 11121 / KW20 / Rd</strain>
    </source>
</reference>
<keyword id="KW-1003">Cell membrane</keyword>
<keyword id="KW-0472">Membrane</keyword>
<keyword id="KW-1185">Reference proteome</keyword>
<keyword id="KW-0812">Transmembrane</keyword>
<keyword id="KW-1133">Transmembrane helix</keyword>
<keyword id="KW-0813">Transport</keyword>
<name>Y092_HAEIN</name>
<evidence type="ECO:0000255" key="1"/>
<evidence type="ECO:0000305" key="2"/>
<sequence length="419" mass="42781">MTTVSAIGALVALIVAIFLILKKVSPAYGMLVGALVGGLIGGADLSQTVSLMIGGAQGITTAVMRILAAGVLAGVLIESGAANSITETITNKLGETRALLALALATMILTAVGVFVDVAVITVSPIALALSRRSDLSKAAILLAMIGGGKAGNIMSPNPNAIAAADTFHLPLTSVMMAGIIPALFGLILTYFLAKRLINKGSKVTDKEVIVLETQNLPSFLTALVAPLVAILLLALRPLFDIKVDPLIALPLGGLIGAFCMGKLRNINSYAINGLSKMTPVAIMLLGTGALAGIIANSGLKEVLIQGLEHSGLPSYILAPISGVLMSLATASTTAGTAVASNVFSSTLLELGVSSLAGAAMIHAGATVFDHMPHGSFFHATGGSVNMDIKERLKLIPYESAVGLMMTIVSTLIFGVFKF</sequence>
<proteinExistence type="inferred from homology"/>
<accession>Q57493</accession>
<organism>
    <name type="scientific">Haemophilus influenzae (strain ATCC 51907 / DSM 11121 / KW20 / Rd)</name>
    <dbReference type="NCBI Taxonomy" id="71421"/>
    <lineage>
        <taxon>Bacteria</taxon>
        <taxon>Pseudomonadati</taxon>
        <taxon>Pseudomonadota</taxon>
        <taxon>Gammaproteobacteria</taxon>
        <taxon>Pasteurellales</taxon>
        <taxon>Pasteurellaceae</taxon>
        <taxon>Haemophilus</taxon>
    </lineage>
</organism>
<gene>
    <name type="ordered locus">HI_0092</name>
</gene>
<feature type="chain" id="PRO_0000077884" description="Uncharacterized transporter HI_0092">
    <location>
        <begin position="1"/>
        <end position="419"/>
    </location>
</feature>
<feature type="transmembrane region" description="Helical" evidence="1">
    <location>
        <begin position="1"/>
        <end position="21"/>
    </location>
</feature>
<feature type="transmembrane region" description="Helical" evidence="1">
    <location>
        <begin position="24"/>
        <end position="44"/>
    </location>
</feature>
<feature type="transmembrane region" description="Helical" evidence="1">
    <location>
        <begin position="66"/>
        <end position="86"/>
    </location>
</feature>
<feature type="transmembrane region" description="Helical" evidence="1">
    <location>
        <begin position="101"/>
        <end position="121"/>
    </location>
</feature>
<feature type="transmembrane region" description="Helical" evidence="1">
    <location>
        <begin position="174"/>
        <end position="194"/>
    </location>
</feature>
<feature type="transmembrane region" description="Helical" evidence="1">
    <location>
        <begin position="216"/>
        <end position="236"/>
    </location>
</feature>
<feature type="transmembrane region" description="Helical" evidence="1">
    <location>
        <begin position="242"/>
        <end position="262"/>
    </location>
</feature>
<feature type="transmembrane region" description="Helical" evidence="1">
    <location>
        <begin position="280"/>
        <end position="300"/>
    </location>
</feature>
<feature type="transmembrane region" description="Helical" evidence="1">
    <location>
        <begin position="311"/>
        <end position="331"/>
    </location>
</feature>
<feature type="transmembrane region" description="Helical" evidence="1">
    <location>
        <begin position="349"/>
        <end position="369"/>
    </location>
</feature>
<feature type="transmembrane region" description="Helical" evidence="1">
    <location>
        <begin position="396"/>
        <end position="416"/>
    </location>
</feature>
<protein>
    <recommendedName>
        <fullName>Uncharacterized transporter HI_0092</fullName>
    </recommendedName>
</protein>